<dbReference type="EMBL" id="AE008918">
    <property type="protein sequence ID" value="AAL53350.1"/>
    <property type="molecule type" value="Genomic_DNA"/>
</dbReference>
<dbReference type="PIR" id="AC3523">
    <property type="entry name" value="AC3523"/>
</dbReference>
<dbReference type="RefSeq" id="WP_002967147.1">
    <property type="nucleotide sequence ID" value="NZ_GG703779.1"/>
</dbReference>
<dbReference type="SMR" id="Q8YDR6"/>
<dbReference type="KEGG" id="bme:BMEII0109"/>
<dbReference type="KEGG" id="bmel:DK63_3136"/>
<dbReference type="PATRIC" id="fig|224914.52.peg.3284"/>
<dbReference type="eggNOG" id="COG0715">
    <property type="taxonomic scope" value="Bacteria"/>
</dbReference>
<dbReference type="PhylomeDB" id="Q8YDR6"/>
<dbReference type="Proteomes" id="UP000000419">
    <property type="component" value="Chromosome II"/>
</dbReference>
<dbReference type="GO" id="GO:0016020">
    <property type="term" value="C:membrane"/>
    <property type="evidence" value="ECO:0007669"/>
    <property type="project" value="InterPro"/>
</dbReference>
<dbReference type="GO" id="GO:0042597">
    <property type="term" value="C:periplasmic space"/>
    <property type="evidence" value="ECO:0007669"/>
    <property type="project" value="UniProtKB-SubCell"/>
</dbReference>
<dbReference type="GO" id="GO:0042626">
    <property type="term" value="F:ATPase-coupled transmembrane transporter activity"/>
    <property type="evidence" value="ECO:0007669"/>
    <property type="project" value="InterPro"/>
</dbReference>
<dbReference type="CDD" id="cd13561">
    <property type="entry name" value="PBP2_SsuA_like_4"/>
    <property type="match status" value="1"/>
</dbReference>
<dbReference type="Gene3D" id="3.40.190.10">
    <property type="entry name" value="Periplasmic binding protein-like II"/>
    <property type="match status" value="3"/>
</dbReference>
<dbReference type="InterPro" id="IPR010067">
    <property type="entry name" value="ABC_SsuA_sub-bd"/>
</dbReference>
<dbReference type="InterPro" id="IPR001638">
    <property type="entry name" value="Solute-binding_3/MltF_N"/>
</dbReference>
<dbReference type="InterPro" id="IPR015168">
    <property type="entry name" value="SsuA/THI5"/>
</dbReference>
<dbReference type="NCBIfam" id="TIGR01728">
    <property type="entry name" value="SsuA_fam"/>
    <property type="match status" value="1"/>
</dbReference>
<dbReference type="PANTHER" id="PTHR30024">
    <property type="entry name" value="ALIPHATIC SULFONATES-BINDING PROTEIN-RELATED"/>
    <property type="match status" value="1"/>
</dbReference>
<dbReference type="PANTHER" id="PTHR30024:SF47">
    <property type="entry name" value="TAURINE-BINDING PERIPLASMIC PROTEIN"/>
    <property type="match status" value="1"/>
</dbReference>
<dbReference type="Pfam" id="PF09084">
    <property type="entry name" value="NMT1"/>
    <property type="match status" value="1"/>
</dbReference>
<dbReference type="SMART" id="SM00062">
    <property type="entry name" value="PBPb"/>
    <property type="match status" value="1"/>
</dbReference>
<dbReference type="SUPFAM" id="SSF53850">
    <property type="entry name" value="Periplasmic binding protein-like II"/>
    <property type="match status" value="1"/>
</dbReference>
<feature type="signal peptide" evidence="1">
    <location>
        <begin position="1"/>
        <end position="22"/>
    </location>
</feature>
<feature type="chain" id="PRO_0000284081" description="Putative binding protein BMEII0109">
    <location>
        <begin position="23"/>
        <end position="319"/>
    </location>
</feature>
<comment type="function">
    <text>Probably part of an ABC transporter complex.</text>
</comment>
<comment type="subunit">
    <text evidence="2">The complex is composed of two ATP-binding proteins (BMEII0108), two transmembrane proteins (BMEII0107) and a solute-binding protein (BMEII0109).</text>
</comment>
<comment type="subcellular location">
    <subcellularLocation>
        <location evidence="2">Periplasm</location>
    </subcellularLocation>
</comment>
<comment type="similarity">
    <text evidence="2">Belongs to the bacterial solute-binding protein SsuA/TauA family.</text>
</comment>
<protein>
    <recommendedName>
        <fullName>Putative binding protein BMEII0109</fullName>
    </recommendedName>
</protein>
<sequence length="319" mass="34450">MKRRTFLAMSLALTFLPSVALADNIPVRVGYIADYWGTSITAIASEKGLWEKHGLDADTRVFTNGPIQVQALGAGSLDFGYIGPGALWLPASGKAKIVAINSVGFSDRVIAQEGFKSMADLKGKKIGVPEGTSGDMLLRLALGKAGMKLDDVQVIKMDPSTVVSAFASKQIDAAGIWYPLIGTIKEHVPGMVELAANSDFFPDKTFPSAFIARNEIVAENPEAVKRMIAVIEEAEDFRTANPEQSVDITAKFLKVDKANLETEAKNGKSLTSEELVKLTRDGSVNGWLSGMADMFVTFGKLKSPLDPKDYYLADYFTAK</sequence>
<reference key="1">
    <citation type="journal article" date="2002" name="Proc. Natl. Acad. Sci. U.S.A.">
        <title>The genome sequence of the facultative intracellular pathogen Brucella melitensis.</title>
        <authorList>
            <person name="DelVecchio V.G."/>
            <person name="Kapatral V."/>
            <person name="Redkar R.J."/>
            <person name="Patra G."/>
            <person name="Mujer C."/>
            <person name="Los T."/>
            <person name="Ivanova N."/>
            <person name="Anderson I."/>
            <person name="Bhattacharyya A."/>
            <person name="Lykidis A."/>
            <person name="Reznik G."/>
            <person name="Jablonski L."/>
            <person name="Larsen N."/>
            <person name="D'Souza M."/>
            <person name="Bernal A."/>
            <person name="Mazur M."/>
            <person name="Goltsman E."/>
            <person name="Selkov E."/>
            <person name="Elzer P.H."/>
            <person name="Hagius S."/>
            <person name="O'Callaghan D."/>
            <person name="Letesson J.-J."/>
            <person name="Haselkorn R."/>
            <person name="Kyrpides N.C."/>
            <person name="Overbeek R."/>
        </authorList>
    </citation>
    <scope>NUCLEOTIDE SEQUENCE [LARGE SCALE GENOMIC DNA]</scope>
    <source>
        <strain>ATCC 23456 / CCUG 17765 / NCTC 10094 / 16M</strain>
    </source>
</reference>
<accession>Q8YDR6</accession>
<proteinExistence type="inferred from homology"/>
<organism>
    <name type="scientific">Brucella melitensis biotype 1 (strain ATCC 23456 / CCUG 17765 / NCTC 10094 / 16M)</name>
    <dbReference type="NCBI Taxonomy" id="224914"/>
    <lineage>
        <taxon>Bacteria</taxon>
        <taxon>Pseudomonadati</taxon>
        <taxon>Pseudomonadota</taxon>
        <taxon>Alphaproteobacteria</taxon>
        <taxon>Hyphomicrobiales</taxon>
        <taxon>Brucellaceae</taxon>
        <taxon>Brucella/Ochrobactrum group</taxon>
        <taxon>Brucella</taxon>
    </lineage>
</organism>
<gene>
    <name type="ordered locus">BMEII0109</name>
</gene>
<evidence type="ECO:0000255" key="1"/>
<evidence type="ECO:0000305" key="2"/>
<name>Y3109_BRUME</name>
<keyword id="KW-0574">Periplasm</keyword>
<keyword id="KW-0732">Signal</keyword>
<keyword id="KW-0813">Transport</keyword>